<dbReference type="EC" id="3.1.26.5" evidence="1"/>
<dbReference type="EMBL" id="CP000058">
    <property type="protein sequence ID" value="AAZ35201.1"/>
    <property type="molecule type" value="Genomic_DNA"/>
</dbReference>
<dbReference type="RefSeq" id="WP_011169944.1">
    <property type="nucleotide sequence ID" value="NC_005773.3"/>
</dbReference>
<dbReference type="SMR" id="Q48BF0"/>
<dbReference type="KEGG" id="psp:PSPPH_5222"/>
<dbReference type="eggNOG" id="COG0594">
    <property type="taxonomic scope" value="Bacteria"/>
</dbReference>
<dbReference type="HOGENOM" id="CLU_117179_11_0_6"/>
<dbReference type="Proteomes" id="UP000000551">
    <property type="component" value="Chromosome"/>
</dbReference>
<dbReference type="GO" id="GO:0030677">
    <property type="term" value="C:ribonuclease P complex"/>
    <property type="evidence" value="ECO:0007669"/>
    <property type="project" value="TreeGrafter"/>
</dbReference>
<dbReference type="GO" id="GO:0042781">
    <property type="term" value="F:3'-tRNA processing endoribonuclease activity"/>
    <property type="evidence" value="ECO:0007669"/>
    <property type="project" value="TreeGrafter"/>
</dbReference>
<dbReference type="GO" id="GO:0004526">
    <property type="term" value="F:ribonuclease P activity"/>
    <property type="evidence" value="ECO:0007669"/>
    <property type="project" value="UniProtKB-UniRule"/>
</dbReference>
<dbReference type="GO" id="GO:0000049">
    <property type="term" value="F:tRNA binding"/>
    <property type="evidence" value="ECO:0007669"/>
    <property type="project" value="UniProtKB-UniRule"/>
</dbReference>
<dbReference type="GO" id="GO:0001682">
    <property type="term" value="P:tRNA 5'-leader removal"/>
    <property type="evidence" value="ECO:0007669"/>
    <property type="project" value="UniProtKB-UniRule"/>
</dbReference>
<dbReference type="Gene3D" id="3.30.230.10">
    <property type="match status" value="1"/>
</dbReference>
<dbReference type="HAMAP" id="MF_00227">
    <property type="entry name" value="RNase_P"/>
    <property type="match status" value="1"/>
</dbReference>
<dbReference type="InterPro" id="IPR020568">
    <property type="entry name" value="Ribosomal_Su5_D2-typ_SF"/>
</dbReference>
<dbReference type="InterPro" id="IPR014721">
    <property type="entry name" value="Ribsml_uS5_D2-typ_fold_subgr"/>
</dbReference>
<dbReference type="InterPro" id="IPR000100">
    <property type="entry name" value="RNase_P"/>
</dbReference>
<dbReference type="NCBIfam" id="TIGR00188">
    <property type="entry name" value="rnpA"/>
    <property type="match status" value="1"/>
</dbReference>
<dbReference type="PANTHER" id="PTHR33992">
    <property type="entry name" value="RIBONUCLEASE P PROTEIN COMPONENT"/>
    <property type="match status" value="1"/>
</dbReference>
<dbReference type="PANTHER" id="PTHR33992:SF1">
    <property type="entry name" value="RIBONUCLEASE P PROTEIN COMPONENT"/>
    <property type="match status" value="1"/>
</dbReference>
<dbReference type="Pfam" id="PF00825">
    <property type="entry name" value="Ribonuclease_P"/>
    <property type="match status" value="1"/>
</dbReference>
<dbReference type="SUPFAM" id="SSF54211">
    <property type="entry name" value="Ribosomal protein S5 domain 2-like"/>
    <property type="match status" value="1"/>
</dbReference>
<organism>
    <name type="scientific">Pseudomonas savastanoi pv. phaseolicola (strain 1448A / Race 6)</name>
    <name type="common">Pseudomonas syringae pv. phaseolicola (strain 1448A / Race 6)</name>
    <dbReference type="NCBI Taxonomy" id="264730"/>
    <lineage>
        <taxon>Bacteria</taxon>
        <taxon>Pseudomonadati</taxon>
        <taxon>Pseudomonadota</taxon>
        <taxon>Gammaproteobacteria</taxon>
        <taxon>Pseudomonadales</taxon>
        <taxon>Pseudomonadaceae</taxon>
        <taxon>Pseudomonas</taxon>
    </lineage>
</organism>
<reference key="1">
    <citation type="journal article" date="2005" name="J. Bacteriol.">
        <title>Whole-genome sequence analysis of Pseudomonas syringae pv. phaseolicola 1448A reveals divergence among pathovars in genes involved in virulence and transposition.</title>
        <authorList>
            <person name="Joardar V."/>
            <person name="Lindeberg M."/>
            <person name="Jackson R.W."/>
            <person name="Selengut J."/>
            <person name="Dodson R."/>
            <person name="Brinkac L.M."/>
            <person name="Daugherty S.C."/>
            <person name="DeBoy R.T."/>
            <person name="Durkin A.S."/>
            <person name="Gwinn Giglio M."/>
            <person name="Madupu R."/>
            <person name="Nelson W.C."/>
            <person name="Rosovitz M.J."/>
            <person name="Sullivan S.A."/>
            <person name="Crabtree J."/>
            <person name="Creasy T."/>
            <person name="Davidsen T.M."/>
            <person name="Haft D.H."/>
            <person name="Zafar N."/>
            <person name="Zhou L."/>
            <person name="Halpin R."/>
            <person name="Holley T."/>
            <person name="Khouri H.M."/>
            <person name="Feldblyum T.V."/>
            <person name="White O."/>
            <person name="Fraser C.M."/>
            <person name="Chatterjee A.K."/>
            <person name="Cartinhour S."/>
            <person name="Schneider D."/>
            <person name="Mansfield J.W."/>
            <person name="Collmer A."/>
            <person name="Buell R."/>
        </authorList>
    </citation>
    <scope>NUCLEOTIDE SEQUENCE [LARGE SCALE GENOMIC DNA]</scope>
    <source>
        <strain>1448A / Race 6</strain>
    </source>
</reference>
<sequence length="133" mass="15236">MSRDFSREKRLLTPRHFKAVFDSPTGKVPGKNLLLLARNNDLDHPRLGLVIGKKSVKLSVERNRLKRLMRESFRQHQDSLVGWDIVIVARKGLGDVENPELIQYFGKLWKRLARSRPIPEEKSEPAGVDSPDA</sequence>
<proteinExistence type="inferred from homology"/>
<keyword id="KW-0255">Endonuclease</keyword>
<keyword id="KW-0378">Hydrolase</keyword>
<keyword id="KW-0540">Nuclease</keyword>
<keyword id="KW-0694">RNA-binding</keyword>
<keyword id="KW-0819">tRNA processing</keyword>
<comment type="function">
    <text evidence="1">RNaseP catalyzes the removal of the 5'-leader sequence from pre-tRNA to produce the mature 5'-terminus. It can also cleave other RNA substrates such as 4.5S RNA. The protein component plays an auxiliary but essential role in vivo by binding to the 5'-leader sequence and broadening the substrate specificity of the ribozyme.</text>
</comment>
<comment type="catalytic activity">
    <reaction evidence="1">
        <text>Endonucleolytic cleavage of RNA, removing 5'-extranucleotides from tRNA precursor.</text>
        <dbReference type="EC" id="3.1.26.5"/>
    </reaction>
</comment>
<comment type="subunit">
    <text evidence="1">Consists of a catalytic RNA component (M1 or rnpB) and a protein subunit.</text>
</comment>
<comment type="similarity">
    <text evidence="1">Belongs to the RnpA family.</text>
</comment>
<accession>Q48BF0</accession>
<evidence type="ECO:0000255" key="1">
    <source>
        <dbReference type="HAMAP-Rule" id="MF_00227"/>
    </source>
</evidence>
<gene>
    <name evidence="1" type="primary">rnpA</name>
    <name type="ordered locus">PSPPH_5222</name>
</gene>
<name>RNPA_PSE14</name>
<protein>
    <recommendedName>
        <fullName evidence="1">Ribonuclease P protein component</fullName>
        <shortName evidence="1">RNase P protein</shortName>
        <shortName evidence="1">RNaseP protein</shortName>
        <ecNumber evidence="1">3.1.26.5</ecNumber>
    </recommendedName>
    <alternativeName>
        <fullName evidence="1">Protein C5</fullName>
    </alternativeName>
</protein>
<feature type="chain" id="PRO_1000021442" description="Ribonuclease P protein component">
    <location>
        <begin position="1"/>
        <end position="133"/>
    </location>
</feature>